<sequence length="682" mass="72148">MSRKQLALFEPVLLVQALTDAVKKLSPRAQWRNPVMFVVWAGSVLTTLLTLAMVTGQIAGSALFTGVISLWLWFTVLFANFAEALAEGRSKAQANSLKGVKKTAFARRLRAPRHDAQADNVPAAELRKGDIVLVKAGDIIPCDGEVIEGGASVDESAITGESAPVIRESGGDFASVTGGTRILSDWLVIACSVNPGETFLDRMIAMVEGAQRRKTPNEIALTILLIALTIVFLLATATLWPFSAWGGNAVSVTVLVALLVCLIPTTIGGLLSAIGVAGMSRMLGANVIATSGRAVEAAGDVDVLLLDKTGTITLGNRQASDFIPARGVDERALADAAQLASLADETPEGRSIVILAKQRFNLRERDMQSLHATFVPFTAQSRMSGINIDNRMIRKGSVDAIRRHVESNGGHFPADVEQNVENVARLGATPLVVVEGARVLGVIALKDIVKGGIKERFAQLRKMGIKTVMITGDNRLTAAAIAAEAGVDDFLAEATPEAKLALIRQYQAEGRLVAMTGDGTNDAPALAQADVAVAMNSGTQAAKEAGNMVDLDSNPTKLIEVVHIGKQMLMTRGSLTTFSIANDVAKYFAIIPAAFAATYPQLNALNVMGLHSPNSAILSAVIFNALIIIFLIPLALKGVSYKPLSASAMLRRNLWIYGLGGLVVPFIGIKVIDVLLTLLGLA</sequence>
<proteinExistence type="inferred from homology"/>
<reference key="1">
    <citation type="journal article" date="2004" name="Nat. Genet.">
        <title>Comparison of genome degradation in Paratyphi A and Typhi, human-restricted serovars of Salmonella enterica that cause typhoid.</title>
        <authorList>
            <person name="McClelland M."/>
            <person name="Sanderson K.E."/>
            <person name="Clifton S.W."/>
            <person name="Latreille P."/>
            <person name="Porwollik S."/>
            <person name="Sabo A."/>
            <person name="Meyer R."/>
            <person name="Bieri T."/>
            <person name="Ozersky P."/>
            <person name="McLellan M."/>
            <person name="Harkins C.R."/>
            <person name="Wang C."/>
            <person name="Nguyen C."/>
            <person name="Berghoff A."/>
            <person name="Elliott G."/>
            <person name="Kohlberg S."/>
            <person name="Strong C."/>
            <person name="Du F."/>
            <person name="Carter J."/>
            <person name="Kremizki C."/>
            <person name="Layman D."/>
            <person name="Leonard S."/>
            <person name="Sun H."/>
            <person name="Fulton L."/>
            <person name="Nash W."/>
            <person name="Miner T."/>
            <person name="Minx P."/>
            <person name="Delehaunty K."/>
            <person name="Fronick C."/>
            <person name="Magrini V."/>
            <person name="Nhan M."/>
            <person name="Warren W."/>
            <person name="Florea L."/>
            <person name="Spieth J."/>
            <person name="Wilson R.K."/>
        </authorList>
    </citation>
    <scope>NUCLEOTIDE SEQUENCE [LARGE SCALE GENOMIC DNA]</scope>
    <source>
        <strain>ATCC 9150 / SARB42</strain>
    </source>
</reference>
<protein>
    <recommendedName>
        <fullName evidence="1">Potassium-transporting ATPase ATP-binding subunit</fullName>
        <ecNumber evidence="1">7.2.2.6</ecNumber>
    </recommendedName>
    <alternativeName>
        <fullName evidence="1">ATP phosphohydrolase [potassium-transporting] B chain</fullName>
    </alternativeName>
    <alternativeName>
        <fullName evidence="1">Potassium-binding and translocating subunit B</fullName>
    </alternativeName>
    <alternativeName>
        <fullName evidence="1">Potassium-translocating ATPase B chain</fullName>
    </alternativeName>
</protein>
<name>KDPB_SALPA</name>
<dbReference type="EC" id="7.2.2.6" evidence="1"/>
<dbReference type="EMBL" id="CP000026">
    <property type="protein sequence ID" value="AAV77938.1"/>
    <property type="molecule type" value="Genomic_DNA"/>
</dbReference>
<dbReference type="RefSeq" id="WP_000088032.1">
    <property type="nucleotide sequence ID" value="NC_006511.1"/>
</dbReference>
<dbReference type="SMR" id="Q5PCJ7"/>
<dbReference type="KEGG" id="spt:SPA2036"/>
<dbReference type="HOGENOM" id="CLU_025728_2_0_6"/>
<dbReference type="Proteomes" id="UP000008185">
    <property type="component" value="Chromosome"/>
</dbReference>
<dbReference type="GO" id="GO:0005886">
    <property type="term" value="C:plasma membrane"/>
    <property type="evidence" value="ECO:0007669"/>
    <property type="project" value="UniProtKB-SubCell"/>
</dbReference>
<dbReference type="GO" id="GO:0005524">
    <property type="term" value="F:ATP binding"/>
    <property type="evidence" value="ECO:0007669"/>
    <property type="project" value="UniProtKB-UniRule"/>
</dbReference>
<dbReference type="GO" id="GO:0016887">
    <property type="term" value="F:ATP hydrolysis activity"/>
    <property type="evidence" value="ECO:0007669"/>
    <property type="project" value="InterPro"/>
</dbReference>
<dbReference type="GO" id="GO:0000287">
    <property type="term" value="F:magnesium ion binding"/>
    <property type="evidence" value="ECO:0007669"/>
    <property type="project" value="UniProtKB-UniRule"/>
</dbReference>
<dbReference type="GO" id="GO:0008556">
    <property type="term" value="F:P-type potassium transmembrane transporter activity"/>
    <property type="evidence" value="ECO:0007669"/>
    <property type="project" value="UniProtKB-UniRule"/>
</dbReference>
<dbReference type="CDD" id="cd02078">
    <property type="entry name" value="P-type_ATPase_K"/>
    <property type="match status" value="1"/>
</dbReference>
<dbReference type="FunFam" id="2.70.150.10:FF:000010">
    <property type="entry name" value="Potassium-transporting ATPase ATP-binding subunit"/>
    <property type="match status" value="1"/>
</dbReference>
<dbReference type="FunFam" id="3.40.1110.10:FF:000007">
    <property type="entry name" value="Potassium-transporting ATPase ATP-binding subunit"/>
    <property type="match status" value="1"/>
</dbReference>
<dbReference type="Gene3D" id="3.40.1110.10">
    <property type="entry name" value="Calcium-transporting ATPase, cytoplasmic domain N"/>
    <property type="match status" value="1"/>
</dbReference>
<dbReference type="Gene3D" id="2.70.150.10">
    <property type="entry name" value="Calcium-transporting ATPase, cytoplasmic transduction domain A"/>
    <property type="match status" value="1"/>
</dbReference>
<dbReference type="Gene3D" id="3.40.50.1000">
    <property type="entry name" value="HAD superfamily/HAD-like"/>
    <property type="match status" value="1"/>
</dbReference>
<dbReference type="HAMAP" id="MF_00285">
    <property type="entry name" value="KdpB"/>
    <property type="match status" value="1"/>
</dbReference>
<dbReference type="InterPro" id="IPR023299">
    <property type="entry name" value="ATPase_P-typ_cyto_dom_N"/>
</dbReference>
<dbReference type="InterPro" id="IPR018303">
    <property type="entry name" value="ATPase_P-typ_P_site"/>
</dbReference>
<dbReference type="InterPro" id="IPR023298">
    <property type="entry name" value="ATPase_P-typ_TM_dom_sf"/>
</dbReference>
<dbReference type="InterPro" id="IPR008250">
    <property type="entry name" value="ATPase_P-typ_transduc_dom_A_sf"/>
</dbReference>
<dbReference type="InterPro" id="IPR036412">
    <property type="entry name" value="HAD-like_sf"/>
</dbReference>
<dbReference type="InterPro" id="IPR023214">
    <property type="entry name" value="HAD_sf"/>
</dbReference>
<dbReference type="InterPro" id="IPR006391">
    <property type="entry name" value="P-type_ATPase_bsu_IA"/>
</dbReference>
<dbReference type="InterPro" id="IPR001757">
    <property type="entry name" value="P_typ_ATPase"/>
</dbReference>
<dbReference type="InterPro" id="IPR044492">
    <property type="entry name" value="P_typ_ATPase_HD_dom"/>
</dbReference>
<dbReference type="NCBIfam" id="TIGR01494">
    <property type="entry name" value="ATPase_P-type"/>
    <property type="match status" value="2"/>
</dbReference>
<dbReference type="NCBIfam" id="TIGR01497">
    <property type="entry name" value="kdpB"/>
    <property type="match status" value="1"/>
</dbReference>
<dbReference type="PANTHER" id="PTHR43743">
    <property type="entry name" value="POTASSIUM-TRANSPORTING ATPASE ATP-BINDING SUBUNIT"/>
    <property type="match status" value="1"/>
</dbReference>
<dbReference type="PANTHER" id="PTHR43743:SF1">
    <property type="entry name" value="POTASSIUM-TRANSPORTING ATPASE ATP-BINDING SUBUNIT"/>
    <property type="match status" value="1"/>
</dbReference>
<dbReference type="Pfam" id="PF00122">
    <property type="entry name" value="E1-E2_ATPase"/>
    <property type="match status" value="1"/>
</dbReference>
<dbReference type="Pfam" id="PF00702">
    <property type="entry name" value="Hydrolase"/>
    <property type="match status" value="1"/>
</dbReference>
<dbReference type="PRINTS" id="PR00119">
    <property type="entry name" value="CATATPASE"/>
</dbReference>
<dbReference type="SFLD" id="SFLDG00002">
    <property type="entry name" value="C1.7:_P-type_atpase_like"/>
    <property type="match status" value="1"/>
</dbReference>
<dbReference type="SFLD" id="SFLDF00027">
    <property type="entry name" value="p-type_atpase"/>
    <property type="match status" value="1"/>
</dbReference>
<dbReference type="SUPFAM" id="SSF81653">
    <property type="entry name" value="Calcium ATPase, transduction domain A"/>
    <property type="match status" value="1"/>
</dbReference>
<dbReference type="SUPFAM" id="SSF81665">
    <property type="entry name" value="Calcium ATPase, transmembrane domain M"/>
    <property type="match status" value="1"/>
</dbReference>
<dbReference type="SUPFAM" id="SSF56784">
    <property type="entry name" value="HAD-like"/>
    <property type="match status" value="1"/>
</dbReference>
<dbReference type="SUPFAM" id="SSF81660">
    <property type="entry name" value="Metal cation-transporting ATPase, ATP-binding domain N"/>
    <property type="match status" value="1"/>
</dbReference>
<dbReference type="PROSITE" id="PS00154">
    <property type="entry name" value="ATPASE_E1_E2"/>
    <property type="match status" value="1"/>
</dbReference>
<evidence type="ECO:0000255" key="1">
    <source>
        <dbReference type="HAMAP-Rule" id="MF_00285"/>
    </source>
</evidence>
<organism>
    <name type="scientific">Salmonella paratyphi A (strain ATCC 9150 / SARB42)</name>
    <dbReference type="NCBI Taxonomy" id="295319"/>
    <lineage>
        <taxon>Bacteria</taxon>
        <taxon>Pseudomonadati</taxon>
        <taxon>Pseudomonadota</taxon>
        <taxon>Gammaproteobacteria</taxon>
        <taxon>Enterobacterales</taxon>
        <taxon>Enterobacteriaceae</taxon>
        <taxon>Salmonella</taxon>
    </lineage>
</organism>
<gene>
    <name evidence="1" type="primary">kdpB</name>
    <name type="ordered locus">SPA2036</name>
</gene>
<feature type="chain" id="PRO_1000022445" description="Potassium-transporting ATPase ATP-binding subunit">
    <location>
        <begin position="1"/>
        <end position="682"/>
    </location>
</feature>
<feature type="transmembrane region" description="Helical" evidence="1">
    <location>
        <begin position="34"/>
        <end position="54"/>
    </location>
</feature>
<feature type="transmembrane region" description="Helical" evidence="1">
    <location>
        <begin position="58"/>
        <end position="78"/>
    </location>
</feature>
<feature type="transmembrane region" description="Helical" evidence="1">
    <location>
        <begin position="219"/>
        <end position="239"/>
    </location>
</feature>
<feature type="transmembrane region" description="Helical" evidence="1">
    <location>
        <begin position="254"/>
        <end position="274"/>
    </location>
</feature>
<feature type="transmembrane region" description="Helical" evidence="1">
    <location>
        <begin position="588"/>
        <end position="608"/>
    </location>
</feature>
<feature type="transmembrane region" description="Helical" evidence="1">
    <location>
        <begin position="616"/>
        <end position="636"/>
    </location>
</feature>
<feature type="transmembrane region" description="Helical" evidence="1">
    <location>
        <begin position="662"/>
        <end position="682"/>
    </location>
</feature>
<feature type="active site" description="4-aspartylphosphate intermediate" evidence="1">
    <location>
        <position position="307"/>
    </location>
</feature>
<feature type="binding site" evidence="1">
    <location>
        <position position="344"/>
    </location>
    <ligand>
        <name>ATP</name>
        <dbReference type="ChEBI" id="CHEBI:30616"/>
    </ligand>
</feature>
<feature type="binding site" evidence="1">
    <location>
        <position position="348"/>
    </location>
    <ligand>
        <name>ATP</name>
        <dbReference type="ChEBI" id="CHEBI:30616"/>
    </ligand>
</feature>
<feature type="binding site" evidence="1">
    <location>
        <begin position="377"/>
        <end position="384"/>
    </location>
    <ligand>
        <name>ATP</name>
        <dbReference type="ChEBI" id="CHEBI:30616"/>
    </ligand>
</feature>
<feature type="binding site" evidence="1">
    <location>
        <position position="395"/>
    </location>
    <ligand>
        <name>ATP</name>
        <dbReference type="ChEBI" id="CHEBI:30616"/>
    </ligand>
</feature>
<feature type="binding site" evidence="1">
    <location>
        <position position="518"/>
    </location>
    <ligand>
        <name>Mg(2+)</name>
        <dbReference type="ChEBI" id="CHEBI:18420"/>
    </ligand>
</feature>
<feature type="binding site" evidence="1">
    <location>
        <position position="522"/>
    </location>
    <ligand>
        <name>Mg(2+)</name>
        <dbReference type="ChEBI" id="CHEBI:18420"/>
    </ligand>
</feature>
<keyword id="KW-0067">ATP-binding</keyword>
<keyword id="KW-0997">Cell inner membrane</keyword>
<keyword id="KW-1003">Cell membrane</keyword>
<keyword id="KW-0406">Ion transport</keyword>
<keyword id="KW-0460">Magnesium</keyword>
<keyword id="KW-0472">Membrane</keyword>
<keyword id="KW-0479">Metal-binding</keyword>
<keyword id="KW-0547">Nucleotide-binding</keyword>
<keyword id="KW-0597">Phosphoprotein</keyword>
<keyword id="KW-0630">Potassium</keyword>
<keyword id="KW-0633">Potassium transport</keyword>
<keyword id="KW-1278">Translocase</keyword>
<keyword id="KW-0812">Transmembrane</keyword>
<keyword id="KW-1133">Transmembrane helix</keyword>
<keyword id="KW-0813">Transport</keyword>
<accession>Q5PCJ7</accession>
<comment type="function">
    <text evidence="1">Part of the high-affinity ATP-driven potassium transport (or Kdp) system, which catalyzes the hydrolysis of ATP coupled with the electrogenic transport of potassium into the cytoplasm. This subunit is responsible for energy coupling to the transport system and for the release of the potassium ions to the cytoplasm.</text>
</comment>
<comment type="catalytic activity">
    <reaction evidence="1">
        <text>K(+)(out) + ATP + H2O = K(+)(in) + ADP + phosphate + H(+)</text>
        <dbReference type="Rhea" id="RHEA:16777"/>
        <dbReference type="ChEBI" id="CHEBI:15377"/>
        <dbReference type="ChEBI" id="CHEBI:15378"/>
        <dbReference type="ChEBI" id="CHEBI:29103"/>
        <dbReference type="ChEBI" id="CHEBI:30616"/>
        <dbReference type="ChEBI" id="CHEBI:43474"/>
        <dbReference type="ChEBI" id="CHEBI:456216"/>
        <dbReference type="EC" id="7.2.2.6"/>
    </reaction>
    <physiologicalReaction direction="left-to-right" evidence="1">
        <dbReference type="Rhea" id="RHEA:16778"/>
    </physiologicalReaction>
</comment>
<comment type="subunit">
    <text evidence="1">The system is composed of three essential subunits: KdpA, KdpB and KdpC.</text>
</comment>
<comment type="subcellular location">
    <subcellularLocation>
        <location evidence="1">Cell inner membrane</location>
        <topology evidence="1">Multi-pass membrane protein</topology>
    </subcellularLocation>
</comment>
<comment type="similarity">
    <text evidence="1">Belongs to the cation transport ATPase (P-type) (TC 3.A.3) family. Type IA subfamily.</text>
</comment>